<evidence type="ECO:0000250" key="1"/>
<evidence type="ECO:0000305" key="2"/>
<protein>
    <recommendedName>
        <fullName>Putative histidine biosynthesis bifunctional protein HisCD</fullName>
    </recommendedName>
    <domain>
        <recommendedName>
            <fullName>Histidinol dehydrogenase</fullName>
            <shortName>HDH</shortName>
            <ecNumber>1.1.1.23</ecNumber>
        </recommendedName>
    </domain>
    <domain>
        <recommendedName>
            <fullName>Histidinol-phosphate aminotransferase</fullName>
            <ecNumber>2.6.1.9</ecNumber>
        </recommendedName>
        <alternativeName>
            <fullName>Imidazole acetol-phosphate transaminase</fullName>
        </alternativeName>
    </domain>
</protein>
<accession>Q7N6I1</accession>
<keyword id="KW-0028">Amino-acid biosynthesis</keyword>
<keyword id="KW-0032">Aminotransferase</keyword>
<keyword id="KW-0368">Histidine biosynthesis</keyword>
<keyword id="KW-0479">Metal-binding</keyword>
<keyword id="KW-0520">NAD</keyword>
<keyword id="KW-0560">Oxidoreductase</keyword>
<keyword id="KW-0663">Pyridoxal phosphate</keyword>
<keyword id="KW-1185">Reference proteome</keyword>
<keyword id="KW-0808">Transferase</keyword>
<keyword id="KW-0862">Zinc</keyword>
<organism>
    <name type="scientific">Photorhabdus laumondii subsp. laumondii (strain DSM 15139 / CIP 105565 / TT01)</name>
    <name type="common">Photorhabdus luminescens subsp. laumondii</name>
    <dbReference type="NCBI Taxonomy" id="243265"/>
    <lineage>
        <taxon>Bacteria</taxon>
        <taxon>Pseudomonadati</taxon>
        <taxon>Pseudomonadota</taxon>
        <taxon>Gammaproteobacteria</taxon>
        <taxon>Enterobacterales</taxon>
        <taxon>Morganellaceae</taxon>
        <taxon>Photorhabdus</taxon>
    </lineage>
</organism>
<dbReference type="EC" id="1.1.1.23"/>
<dbReference type="EC" id="2.6.1.9"/>
<dbReference type="EMBL" id="BX571864">
    <property type="protein sequence ID" value="CAE13862.1"/>
    <property type="molecule type" value="Genomic_DNA"/>
</dbReference>
<dbReference type="SMR" id="Q7N6I1"/>
<dbReference type="STRING" id="243265.plu1569"/>
<dbReference type="KEGG" id="plu:plu1569"/>
<dbReference type="eggNOG" id="COG0079">
    <property type="taxonomic scope" value="Bacteria"/>
</dbReference>
<dbReference type="eggNOG" id="COG0141">
    <property type="taxonomic scope" value="Bacteria"/>
</dbReference>
<dbReference type="HOGENOM" id="CLU_011806_0_0_6"/>
<dbReference type="UniPathway" id="UPA00031">
    <property type="reaction ID" value="UER00012"/>
</dbReference>
<dbReference type="UniPathway" id="UPA00031">
    <property type="reaction ID" value="UER00014"/>
</dbReference>
<dbReference type="Proteomes" id="UP000002514">
    <property type="component" value="Chromosome"/>
</dbReference>
<dbReference type="GO" id="GO:0005829">
    <property type="term" value="C:cytosol"/>
    <property type="evidence" value="ECO:0007669"/>
    <property type="project" value="TreeGrafter"/>
</dbReference>
<dbReference type="GO" id="GO:0004399">
    <property type="term" value="F:histidinol dehydrogenase activity"/>
    <property type="evidence" value="ECO:0007669"/>
    <property type="project" value="UniProtKB-UniRule"/>
</dbReference>
<dbReference type="GO" id="GO:0004400">
    <property type="term" value="F:histidinol-phosphate transaminase activity"/>
    <property type="evidence" value="ECO:0007669"/>
    <property type="project" value="UniProtKB-UniRule"/>
</dbReference>
<dbReference type="GO" id="GO:0051287">
    <property type="term" value="F:NAD binding"/>
    <property type="evidence" value="ECO:0007669"/>
    <property type="project" value="InterPro"/>
</dbReference>
<dbReference type="GO" id="GO:0030170">
    <property type="term" value="F:pyridoxal phosphate binding"/>
    <property type="evidence" value="ECO:0007669"/>
    <property type="project" value="InterPro"/>
</dbReference>
<dbReference type="GO" id="GO:0008270">
    <property type="term" value="F:zinc ion binding"/>
    <property type="evidence" value="ECO:0007669"/>
    <property type="project" value="UniProtKB-UniRule"/>
</dbReference>
<dbReference type="GO" id="GO:0000105">
    <property type="term" value="P:L-histidine biosynthetic process"/>
    <property type="evidence" value="ECO:0007669"/>
    <property type="project" value="UniProtKB-UniRule"/>
</dbReference>
<dbReference type="CDD" id="cd00609">
    <property type="entry name" value="AAT_like"/>
    <property type="match status" value="1"/>
</dbReference>
<dbReference type="CDD" id="cd06572">
    <property type="entry name" value="Histidinol_dh"/>
    <property type="match status" value="1"/>
</dbReference>
<dbReference type="FunFam" id="1.20.5.1300:FF:000001">
    <property type="entry name" value="Histidine biosynthesis trifunctional protein"/>
    <property type="match status" value="1"/>
</dbReference>
<dbReference type="FunFam" id="3.40.50.1980:FF:000001">
    <property type="entry name" value="Histidinol dehydrogenase"/>
    <property type="match status" value="1"/>
</dbReference>
<dbReference type="FunFam" id="3.40.50.1980:FF:000002">
    <property type="entry name" value="Histidinol dehydrogenase, chloroplastic"/>
    <property type="match status" value="1"/>
</dbReference>
<dbReference type="Gene3D" id="1.20.5.1300">
    <property type="match status" value="1"/>
</dbReference>
<dbReference type="Gene3D" id="3.90.1150.10">
    <property type="entry name" value="Aspartate Aminotransferase, domain 1"/>
    <property type="match status" value="1"/>
</dbReference>
<dbReference type="Gene3D" id="3.40.50.1980">
    <property type="entry name" value="Nitrogenase molybdenum iron protein domain"/>
    <property type="match status" value="2"/>
</dbReference>
<dbReference type="Gene3D" id="3.40.640.10">
    <property type="entry name" value="Type I PLP-dependent aspartate aminotransferase-like (Major domain)"/>
    <property type="match status" value="1"/>
</dbReference>
<dbReference type="HAMAP" id="MF_01023">
    <property type="entry name" value="HisC_aminotrans_2"/>
    <property type="match status" value="1"/>
</dbReference>
<dbReference type="HAMAP" id="MF_01024">
    <property type="entry name" value="HisD"/>
    <property type="match status" value="1"/>
</dbReference>
<dbReference type="InterPro" id="IPR016161">
    <property type="entry name" value="Ald_DH/histidinol_DH"/>
</dbReference>
<dbReference type="InterPro" id="IPR001917">
    <property type="entry name" value="Aminotrans_II_pyridoxalP_BS"/>
</dbReference>
<dbReference type="InterPro" id="IPR004839">
    <property type="entry name" value="Aminotransferase_I/II_large"/>
</dbReference>
<dbReference type="InterPro" id="IPR005861">
    <property type="entry name" value="HisP_aminotrans"/>
</dbReference>
<dbReference type="InterPro" id="IPR001692">
    <property type="entry name" value="Histidinol_DH_CS"/>
</dbReference>
<dbReference type="InterPro" id="IPR012131">
    <property type="entry name" value="Hstdl_DH"/>
</dbReference>
<dbReference type="InterPro" id="IPR015424">
    <property type="entry name" value="PyrdxlP-dep_Trfase"/>
</dbReference>
<dbReference type="InterPro" id="IPR015421">
    <property type="entry name" value="PyrdxlP-dep_Trfase_major"/>
</dbReference>
<dbReference type="InterPro" id="IPR015422">
    <property type="entry name" value="PyrdxlP-dep_Trfase_small"/>
</dbReference>
<dbReference type="NCBIfam" id="TIGR01141">
    <property type="entry name" value="hisC"/>
    <property type="match status" value="1"/>
</dbReference>
<dbReference type="NCBIfam" id="TIGR00069">
    <property type="entry name" value="hisD"/>
    <property type="match status" value="1"/>
</dbReference>
<dbReference type="PANTHER" id="PTHR21256:SF2">
    <property type="entry name" value="HISTIDINE BIOSYNTHESIS TRIFUNCTIONAL PROTEIN"/>
    <property type="match status" value="1"/>
</dbReference>
<dbReference type="PANTHER" id="PTHR21256">
    <property type="entry name" value="HISTIDINOL DEHYDROGENASE HDH"/>
    <property type="match status" value="1"/>
</dbReference>
<dbReference type="Pfam" id="PF00155">
    <property type="entry name" value="Aminotran_1_2"/>
    <property type="match status" value="1"/>
</dbReference>
<dbReference type="Pfam" id="PF00815">
    <property type="entry name" value="Histidinol_dh"/>
    <property type="match status" value="1"/>
</dbReference>
<dbReference type="PRINTS" id="PR00083">
    <property type="entry name" value="HOLDHDRGNASE"/>
</dbReference>
<dbReference type="SUPFAM" id="SSF53720">
    <property type="entry name" value="ALDH-like"/>
    <property type="match status" value="1"/>
</dbReference>
<dbReference type="SUPFAM" id="SSF53383">
    <property type="entry name" value="PLP-dependent transferases"/>
    <property type="match status" value="1"/>
</dbReference>
<dbReference type="PROSITE" id="PS00599">
    <property type="entry name" value="AA_TRANSFER_CLASS_2"/>
    <property type="match status" value="1"/>
</dbReference>
<dbReference type="PROSITE" id="PS00611">
    <property type="entry name" value="HISOL_DEHYDROGENASE"/>
    <property type="match status" value="1"/>
</dbReference>
<sequence>MTDHFDTLIRWQECHDEQQNALLTRPAISASVEISRTVEQILHAVKEYGDHTLREFSRRFDKTVIENIRISPEEIAAAENSLNNDIKQAMQQAMNNIRVFHEAQKPIKIEVETQPGVYCQQVTRPIDSVGLYIPGGSAPLLSTVLMLGTPAQIAGCHKVVLCSPPPIANEILYAATLCGITEIFQIGGAQAIAAMAFGTESVPKVDKIFGPGNAYVTEAKRQVSQRVDGATIDMPAGPSELLIIADAGANPVFVAADLLSQAEHGPDSQVILVTPDEALAKKVITEIEKQLTRLPRNQIAAKALAHSRIIVTTSLQQCVEISNRYGPEHLIIQTRQPEQLVEKITSAGSVFLGDWSPESAGDYASGTNHVLPTYGYTSTYSSLGLADFLKRMTIQQLTPQGLLNLSQTIETLAQAEQLTAHKNALTLRVAALNIAGQGVNMNNIFDANLLARENIRKLTPYMSARRLGGKGDVWLNANEYPLAPDFQCTEQTLNRYPDCQPASVIRRYAAYAGLQPEQVLACRGADESIELLIRVFCEPGQDVVLFCPPTYGMYSVSAETFGVEQKKITALENWQLDIEAIENNLDRVKLIYICSPNNPTGNAINPDSLRKILELTANRAIVTIDEAYIEFCPENSIASWLKNYPNLVILRTLSKAFALAGLRCGFTLASVDIITLLLKVIAPYPLSTPVADIAAQALTAENIAIMQKRVVEIRENRNDLQQALNKLAIVEKVFPSETNYILVKFYDAETVFKTLWHQGIILRDQRKQPGLEGCLRITIGSRKECERVVEAISALSTVNEQPKEIAN</sequence>
<reference key="1">
    <citation type="journal article" date="2003" name="Nat. Biotechnol.">
        <title>The genome sequence of the entomopathogenic bacterium Photorhabdus luminescens.</title>
        <authorList>
            <person name="Duchaud E."/>
            <person name="Rusniok C."/>
            <person name="Frangeul L."/>
            <person name="Buchrieser C."/>
            <person name="Givaudan A."/>
            <person name="Taourit S."/>
            <person name="Bocs S."/>
            <person name="Boursaux-Eude C."/>
            <person name="Chandler M."/>
            <person name="Charles J.-F."/>
            <person name="Dassa E."/>
            <person name="Derose R."/>
            <person name="Derzelle S."/>
            <person name="Freyssinet G."/>
            <person name="Gaudriault S."/>
            <person name="Medigue C."/>
            <person name="Lanois A."/>
            <person name="Powell K."/>
            <person name="Siguier P."/>
            <person name="Vincent R."/>
            <person name="Wingate V."/>
            <person name="Zouine M."/>
            <person name="Glaser P."/>
            <person name="Boemare N."/>
            <person name="Danchin A."/>
            <person name="Kunst F."/>
        </authorList>
    </citation>
    <scope>NUCLEOTIDE SEQUENCE [LARGE SCALE GENOMIC DNA]</scope>
    <source>
        <strain>DSM 15139 / CIP 105565 / TT01</strain>
    </source>
</reference>
<proteinExistence type="inferred from homology"/>
<gene>
    <name type="primary">hisCD</name>
    <name type="synonym">hisD</name>
    <name type="ordered locus">plu1569</name>
</gene>
<comment type="function">
    <text evidence="1">Catalyzes the sequential NAD-dependent oxidations of L-histidinol to L-histidinaldehyde and then to L-histidine.</text>
</comment>
<comment type="catalytic activity">
    <reaction>
        <text>L-histidinol phosphate + 2-oxoglutarate = 3-(imidazol-4-yl)-2-oxopropyl phosphate + L-glutamate</text>
        <dbReference type="Rhea" id="RHEA:23744"/>
        <dbReference type="ChEBI" id="CHEBI:16810"/>
        <dbReference type="ChEBI" id="CHEBI:29985"/>
        <dbReference type="ChEBI" id="CHEBI:57766"/>
        <dbReference type="ChEBI" id="CHEBI:57980"/>
        <dbReference type="EC" id="2.6.1.9"/>
    </reaction>
</comment>
<comment type="catalytic activity">
    <reaction>
        <text>L-histidinol + 2 NAD(+) + H2O = L-histidine + 2 NADH + 3 H(+)</text>
        <dbReference type="Rhea" id="RHEA:20641"/>
        <dbReference type="ChEBI" id="CHEBI:15377"/>
        <dbReference type="ChEBI" id="CHEBI:15378"/>
        <dbReference type="ChEBI" id="CHEBI:57540"/>
        <dbReference type="ChEBI" id="CHEBI:57595"/>
        <dbReference type="ChEBI" id="CHEBI:57699"/>
        <dbReference type="ChEBI" id="CHEBI:57945"/>
        <dbReference type="EC" id="1.1.1.23"/>
    </reaction>
</comment>
<comment type="cofactor">
    <cofactor evidence="1">
        <name>Zn(2+)</name>
        <dbReference type="ChEBI" id="CHEBI:29105"/>
    </cofactor>
    <text evidence="1">Binds 1 zinc ion per subunit.</text>
</comment>
<comment type="cofactor">
    <cofactor evidence="1">
        <name>pyridoxal 5'-phosphate</name>
        <dbReference type="ChEBI" id="CHEBI:597326"/>
    </cofactor>
</comment>
<comment type="pathway">
    <text>Amino-acid biosynthesis; L-histidine biosynthesis; L-histidine from 5-phospho-alpha-D-ribose 1-diphosphate: step 7/9.</text>
</comment>
<comment type="pathway">
    <text>Amino-acid biosynthesis; L-histidine biosynthesis; L-histidine from 5-phospho-alpha-D-ribose 1-diphosphate: step 9/9.</text>
</comment>
<comment type="subunit">
    <text evidence="1">Homodimer.</text>
</comment>
<comment type="similarity">
    <text evidence="2">In the N-terminal section; belongs to the histidinol dehydrogenase family.</text>
</comment>
<comment type="similarity">
    <text evidence="2">In the C-terminal section; belongs to the class-II pyridoxal-phosphate-dependent aminotransferase family. Histidinol-phosphate aminotransferase subfamily.</text>
</comment>
<feature type="chain" id="PRO_0000153415" description="Putative histidine biosynthesis bifunctional protein HisCD">
    <location>
        <begin position="1"/>
        <end position="807"/>
    </location>
</feature>
<feature type="region of interest" description="Histidinol dehydrogenase">
    <location>
        <begin position="1"/>
        <end position="440"/>
    </location>
</feature>
<feature type="region of interest" description="Histidinol-phosphate aminotransferase">
    <location>
        <begin position="441"/>
        <end position="807"/>
    </location>
</feature>
<feature type="active site" evidence="1">
    <location>
        <position position="328"/>
    </location>
</feature>
<feature type="active site" evidence="1">
    <location>
        <position position="329"/>
    </location>
</feature>
<feature type="binding site" evidence="1">
    <location>
        <position position="261"/>
    </location>
    <ligand>
        <name>Zn(2+)</name>
        <dbReference type="ChEBI" id="CHEBI:29105"/>
    </ligand>
</feature>
<feature type="binding site" evidence="1">
    <location>
        <position position="264"/>
    </location>
    <ligand>
        <name>Zn(2+)</name>
        <dbReference type="ChEBI" id="CHEBI:29105"/>
    </ligand>
</feature>
<feature type="binding site" evidence="1">
    <location>
        <position position="362"/>
    </location>
    <ligand>
        <name>Zn(2+)</name>
        <dbReference type="ChEBI" id="CHEBI:29105"/>
    </ligand>
</feature>
<feature type="binding site" evidence="1">
    <location>
        <position position="421"/>
    </location>
    <ligand>
        <name>Zn(2+)</name>
        <dbReference type="ChEBI" id="CHEBI:29105"/>
    </ligand>
</feature>
<feature type="modified residue" description="N6-(pyridoxal phosphate)lysine" evidence="1">
    <location>
        <position position="655"/>
    </location>
</feature>
<name>HIS8_PHOLL</name>